<feature type="chain" id="PRO_1000095292" description="Aspartyl/glutamyl-tRNA(Asn/Gln) amidotransferase subunit C">
    <location>
        <begin position="1"/>
        <end position="102"/>
    </location>
</feature>
<proteinExistence type="inferred from homology"/>
<gene>
    <name evidence="1" type="primary">gatC</name>
    <name type="ordered locus">LCK_01342</name>
</gene>
<accession>B1N064</accession>
<sequence length="102" mass="11145">MSETTISKEEVAHVAKLAKLSFDDSELTQFTTQLGDILNIFNTLGEVDTAAVEPTYSVTENVNHLRDDVAHNWHQKQGLLENAPLASAGLIKVPAILEDEGE</sequence>
<comment type="function">
    <text evidence="1">Allows the formation of correctly charged Asn-tRNA(Asn) or Gln-tRNA(Gln) through the transamidation of misacylated Asp-tRNA(Asn) or Glu-tRNA(Gln) in organisms which lack either or both of asparaginyl-tRNA or glutaminyl-tRNA synthetases. The reaction takes place in the presence of glutamine and ATP through an activated phospho-Asp-tRNA(Asn) or phospho-Glu-tRNA(Gln).</text>
</comment>
<comment type="catalytic activity">
    <reaction evidence="1">
        <text>L-glutamyl-tRNA(Gln) + L-glutamine + ATP + H2O = L-glutaminyl-tRNA(Gln) + L-glutamate + ADP + phosphate + H(+)</text>
        <dbReference type="Rhea" id="RHEA:17521"/>
        <dbReference type="Rhea" id="RHEA-COMP:9681"/>
        <dbReference type="Rhea" id="RHEA-COMP:9684"/>
        <dbReference type="ChEBI" id="CHEBI:15377"/>
        <dbReference type="ChEBI" id="CHEBI:15378"/>
        <dbReference type="ChEBI" id="CHEBI:29985"/>
        <dbReference type="ChEBI" id="CHEBI:30616"/>
        <dbReference type="ChEBI" id="CHEBI:43474"/>
        <dbReference type="ChEBI" id="CHEBI:58359"/>
        <dbReference type="ChEBI" id="CHEBI:78520"/>
        <dbReference type="ChEBI" id="CHEBI:78521"/>
        <dbReference type="ChEBI" id="CHEBI:456216"/>
    </reaction>
</comment>
<comment type="catalytic activity">
    <reaction evidence="1">
        <text>L-aspartyl-tRNA(Asn) + L-glutamine + ATP + H2O = L-asparaginyl-tRNA(Asn) + L-glutamate + ADP + phosphate + 2 H(+)</text>
        <dbReference type="Rhea" id="RHEA:14513"/>
        <dbReference type="Rhea" id="RHEA-COMP:9674"/>
        <dbReference type="Rhea" id="RHEA-COMP:9677"/>
        <dbReference type="ChEBI" id="CHEBI:15377"/>
        <dbReference type="ChEBI" id="CHEBI:15378"/>
        <dbReference type="ChEBI" id="CHEBI:29985"/>
        <dbReference type="ChEBI" id="CHEBI:30616"/>
        <dbReference type="ChEBI" id="CHEBI:43474"/>
        <dbReference type="ChEBI" id="CHEBI:58359"/>
        <dbReference type="ChEBI" id="CHEBI:78515"/>
        <dbReference type="ChEBI" id="CHEBI:78516"/>
        <dbReference type="ChEBI" id="CHEBI:456216"/>
    </reaction>
</comment>
<comment type="subunit">
    <text evidence="1">Heterotrimer of A, B and C subunits.</text>
</comment>
<comment type="similarity">
    <text evidence="1">Belongs to the GatC family.</text>
</comment>
<dbReference type="EC" id="6.3.5.-" evidence="1"/>
<dbReference type="EMBL" id="DQ489736">
    <property type="protein sequence ID" value="ACA83166.1"/>
    <property type="molecule type" value="Genomic_DNA"/>
</dbReference>
<dbReference type="RefSeq" id="WP_004902542.1">
    <property type="nucleotide sequence ID" value="NC_010471.1"/>
</dbReference>
<dbReference type="SMR" id="B1N064"/>
<dbReference type="STRING" id="349519.LCK_01342"/>
<dbReference type="GeneID" id="61101640"/>
<dbReference type="KEGG" id="lci:LCK_01342"/>
<dbReference type="eggNOG" id="COG0721">
    <property type="taxonomic scope" value="Bacteria"/>
</dbReference>
<dbReference type="HOGENOM" id="CLU_105899_1_2_9"/>
<dbReference type="OrthoDB" id="9813938at2"/>
<dbReference type="Proteomes" id="UP000002166">
    <property type="component" value="Chromosome"/>
</dbReference>
<dbReference type="GO" id="GO:0050566">
    <property type="term" value="F:asparaginyl-tRNA synthase (glutamine-hydrolyzing) activity"/>
    <property type="evidence" value="ECO:0007669"/>
    <property type="project" value="RHEA"/>
</dbReference>
<dbReference type="GO" id="GO:0005524">
    <property type="term" value="F:ATP binding"/>
    <property type="evidence" value="ECO:0007669"/>
    <property type="project" value="UniProtKB-KW"/>
</dbReference>
<dbReference type="GO" id="GO:0050567">
    <property type="term" value="F:glutaminyl-tRNA synthase (glutamine-hydrolyzing) activity"/>
    <property type="evidence" value="ECO:0007669"/>
    <property type="project" value="UniProtKB-UniRule"/>
</dbReference>
<dbReference type="GO" id="GO:0070681">
    <property type="term" value="P:glutaminyl-tRNAGln biosynthesis via transamidation"/>
    <property type="evidence" value="ECO:0007669"/>
    <property type="project" value="TreeGrafter"/>
</dbReference>
<dbReference type="GO" id="GO:0006450">
    <property type="term" value="P:regulation of translational fidelity"/>
    <property type="evidence" value="ECO:0007669"/>
    <property type="project" value="InterPro"/>
</dbReference>
<dbReference type="GO" id="GO:0006412">
    <property type="term" value="P:translation"/>
    <property type="evidence" value="ECO:0007669"/>
    <property type="project" value="UniProtKB-UniRule"/>
</dbReference>
<dbReference type="Gene3D" id="1.10.20.60">
    <property type="entry name" value="Glu-tRNAGln amidotransferase C subunit, N-terminal domain"/>
    <property type="match status" value="1"/>
</dbReference>
<dbReference type="HAMAP" id="MF_00122">
    <property type="entry name" value="GatC"/>
    <property type="match status" value="1"/>
</dbReference>
<dbReference type="InterPro" id="IPR036113">
    <property type="entry name" value="Asp/Glu-ADT_sf_sub_c"/>
</dbReference>
<dbReference type="InterPro" id="IPR003837">
    <property type="entry name" value="GatC"/>
</dbReference>
<dbReference type="NCBIfam" id="TIGR00135">
    <property type="entry name" value="gatC"/>
    <property type="match status" value="1"/>
</dbReference>
<dbReference type="PANTHER" id="PTHR15004">
    <property type="entry name" value="GLUTAMYL-TRNA(GLN) AMIDOTRANSFERASE SUBUNIT C, MITOCHONDRIAL"/>
    <property type="match status" value="1"/>
</dbReference>
<dbReference type="PANTHER" id="PTHR15004:SF0">
    <property type="entry name" value="GLUTAMYL-TRNA(GLN) AMIDOTRANSFERASE SUBUNIT C, MITOCHONDRIAL"/>
    <property type="match status" value="1"/>
</dbReference>
<dbReference type="Pfam" id="PF02686">
    <property type="entry name" value="GatC"/>
    <property type="match status" value="1"/>
</dbReference>
<dbReference type="SUPFAM" id="SSF141000">
    <property type="entry name" value="Glu-tRNAGln amidotransferase C subunit"/>
    <property type="match status" value="1"/>
</dbReference>
<organism>
    <name type="scientific">Leuconostoc citreum (strain KM20)</name>
    <dbReference type="NCBI Taxonomy" id="349519"/>
    <lineage>
        <taxon>Bacteria</taxon>
        <taxon>Bacillati</taxon>
        <taxon>Bacillota</taxon>
        <taxon>Bacilli</taxon>
        <taxon>Lactobacillales</taxon>
        <taxon>Lactobacillaceae</taxon>
        <taxon>Leuconostoc</taxon>
    </lineage>
</organism>
<name>GATC_LEUCK</name>
<protein>
    <recommendedName>
        <fullName evidence="1">Aspartyl/glutamyl-tRNA(Asn/Gln) amidotransferase subunit C</fullName>
        <shortName evidence="1">Asp/Glu-ADT subunit C</shortName>
        <ecNumber evidence="1">6.3.5.-</ecNumber>
    </recommendedName>
</protein>
<reference key="1">
    <citation type="journal article" date="2008" name="J. Bacteriol.">
        <title>Complete genome sequence of Leuconostoc citreum KM20.</title>
        <authorList>
            <person name="Kim J.F."/>
            <person name="Jeong H."/>
            <person name="Lee J.-S."/>
            <person name="Choi S.-H."/>
            <person name="Ha M."/>
            <person name="Hur C.-G."/>
            <person name="Kim J.-S."/>
            <person name="Lee S."/>
            <person name="Park H.-S."/>
            <person name="Park Y.-H."/>
            <person name="Oh T.K."/>
        </authorList>
    </citation>
    <scope>NUCLEOTIDE SEQUENCE [LARGE SCALE GENOMIC DNA]</scope>
    <source>
        <strain>KM20</strain>
    </source>
</reference>
<evidence type="ECO:0000255" key="1">
    <source>
        <dbReference type="HAMAP-Rule" id="MF_00122"/>
    </source>
</evidence>
<keyword id="KW-0067">ATP-binding</keyword>
<keyword id="KW-0436">Ligase</keyword>
<keyword id="KW-0547">Nucleotide-binding</keyword>
<keyword id="KW-0648">Protein biosynthesis</keyword>
<keyword id="KW-1185">Reference proteome</keyword>